<evidence type="ECO:0000255" key="1">
    <source>
        <dbReference type="HAMAP-Rule" id="MF_01078"/>
    </source>
</evidence>
<organism>
    <name type="scientific">Methanococcus maripaludis (strain DSM 14266 / JCM 13030 / NBRC 101832 / S2 / LL)</name>
    <dbReference type="NCBI Taxonomy" id="267377"/>
    <lineage>
        <taxon>Archaea</taxon>
        <taxon>Methanobacteriati</taxon>
        <taxon>Methanobacteriota</taxon>
        <taxon>Methanomada group</taxon>
        <taxon>Methanococci</taxon>
        <taxon>Methanococcales</taxon>
        <taxon>Methanococcaceae</taxon>
        <taxon>Methanococcus</taxon>
    </lineage>
</organism>
<protein>
    <recommendedName>
        <fullName evidence="1">RNA-free ribonuclease P</fullName>
        <shortName evidence="1">RNA-free RNase P</shortName>
        <ecNumber evidence="1">3.1.26.5</ecNumber>
    </recommendedName>
    <alternativeName>
        <fullName evidence="1">Protein-only RNase P</fullName>
    </alternativeName>
</protein>
<name>RFRNP_METMP</name>
<comment type="function">
    <text evidence="1">RNA-free RNase P that catalyzes the removal of the 5'-leader sequence from pre-tRNA to produce the mature 5'-terminus.</text>
</comment>
<comment type="catalytic activity">
    <reaction evidence="1">
        <text>Endonucleolytic cleavage of RNA, removing 5'-extranucleotides from tRNA precursor.</text>
        <dbReference type="EC" id="3.1.26.5"/>
    </reaction>
</comment>
<comment type="similarity">
    <text evidence="1">Belongs to the HARP family.</text>
</comment>
<keyword id="KW-0255">Endonuclease</keyword>
<keyword id="KW-0378">Hydrolase</keyword>
<keyword id="KW-0540">Nuclease</keyword>
<keyword id="KW-1185">Reference proteome</keyword>
<keyword id="KW-0819">tRNA processing</keyword>
<gene>
    <name type="ordered locus">MMP1472</name>
</gene>
<reference key="1">
    <citation type="journal article" date="2004" name="J. Bacteriol.">
        <title>Complete genome sequence of the genetically tractable hydrogenotrophic methanogen Methanococcus maripaludis.</title>
        <authorList>
            <person name="Hendrickson E.L."/>
            <person name="Kaul R."/>
            <person name="Zhou Y."/>
            <person name="Bovee D."/>
            <person name="Chapman P."/>
            <person name="Chung J."/>
            <person name="Conway de Macario E."/>
            <person name="Dodsworth J.A."/>
            <person name="Gillett W."/>
            <person name="Graham D.E."/>
            <person name="Hackett M."/>
            <person name="Haydock A.K."/>
            <person name="Kang A."/>
            <person name="Land M.L."/>
            <person name="Levy R."/>
            <person name="Lie T.J."/>
            <person name="Major T.A."/>
            <person name="Moore B.C."/>
            <person name="Porat I."/>
            <person name="Palmeiri A."/>
            <person name="Rouse G."/>
            <person name="Saenphimmachak C."/>
            <person name="Soell D."/>
            <person name="Van Dien S."/>
            <person name="Wang T."/>
            <person name="Whitman W.B."/>
            <person name="Xia Q."/>
            <person name="Zhang Y."/>
            <person name="Larimer F.W."/>
            <person name="Olson M.V."/>
            <person name="Leigh J.A."/>
        </authorList>
    </citation>
    <scope>NUCLEOTIDE SEQUENCE [LARGE SCALE GENOMIC DNA]</scope>
    <source>
        <strain>DSM 14266 / JCM 13030 / NBRC 101832 / S2 / LL</strain>
    </source>
</reference>
<sequence length="223" mass="25673">MQKQRFCLDTTAITDSDVRKSLGVSNISESAEKIMDIIAQARVQLDISCHIPYDTVYKELVGFLTREGCAPETLIKVDTWLVKKTPNRYEIKIPAEIFYEYIKDLRERINKGMRISENAMYETALEAYILSKPDEKDREDVLNEVLSKTVNSFRVKYRNALRGGTLDSAPDLDVLLLAKELDAAVVANDEGIEKWAQRLGLRFVNARDFPFILQEYLDLWDKK</sequence>
<accession>Q6LX80</accession>
<feature type="chain" id="PRO_0000136082" description="RNA-free ribonuclease P">
    <location>
        <begin position="1"/>
        <end position="223"/>
    </location>
</feature>
<proteinExistence type="inferred from homology"/>
<dbReference type="EC" id="3.1.26.5" evidence="1"/>
<dbReference type="EMBL" id="BX950229">
    <property type="protein sequence ID" value="CAF31028.1"/>
    <property type="molecule type" value="Genomic_DNA"/>
</dbReference>
<dbReference type="RefSeq" id="WP_011171416.1">
    <property type="nucleotide sequence ID" value="NC_005791.1"/>
</dbReference>
<dbReference type="SMR" id="Q6LX80"/>
<dbReference type="STRING" id="267377.MMP1472"/>
<dbReference type="EnsemblBacteria" id="CAF31028">
    <property type="protein sequence ID" value="CAF31028"/>
    <property type="gene ID" value="MMP1472"/>
</dbReference>
<dbReference type="GeneID" id="10983048"/>
<dbReference type="KEGG" id="mmp:MMP1472"/>
<dbReference type="PATRIC" id="fig|267377.15.peg.1508"/>
<dbReference type="eggNOG" id="arCOG00720">
    <property type="taxonomic scope" value="Archaea"/>
</dbReference>
<dbReference type="HOGENOM" id="CLU_109672_0_0_2"/>
<dbReference type="OrthoDB" id="95197at2157"/>
<dbReference type="Proteomes" id="UP000000590">
    <property type="component" value="Chromosome"/>
</dbReference>
<dbReference type="GO" id="GO:0004526">
    <property type="term" value="F:ribonuclease P activity"/>
    <property type="evidence" value="ECO:0007669"/>
    <property type="project" value="UniProtKB-UniRule"/>
</dbReference>
<dbReference type="GO" id="GO:0001682">
    <property type="term" value="P:tRNA 5'-leader removal"/>
    <property type="evidence" value="ECO:0007669"/>
    <property type="project" value="UniProtKB-UniRule"/>
</dbReference>
<dbReference type="CDD" id="cd18691">
    <property type="entry name" value="PIN_VapC-like"/>
    <property type="match status" value="1"/>
</dbReference>
<dbReference type="HAMAP" id="MF_01078">
    <property type="entry name" value="RNA_free_RNase_P"/>
    <property type="match status" value="1"/>
</dbReference>
<dbReference type="InterPro" id="IPR014856">
    <property type="entry name" value="RNA_free_RNase_P"/>
</dbReference>
<dbReference type="NCBIfam" id="NF003340">
    <property type="entry name" value="PRK04358.1-1"/>
    <property type="match status" value="1"/>
</dbReference>
<dbReference type="NCBIfam" id="NF003343">
    <property type="entry name" value="PRK04358.1-4"/>
    <property type="match status" value="1"/>
</dbReference>
<dbReference type="NCBIfam" id="TIGR03875">
    <property type="entry name" value="RNA_lig_partner"/>
    <property type="match status" value="1"/>
</dbReference>
<dbReference type="PANTHER" id="PTHR41173:SF1">
    <property type="entry name" value="RNA-FREE RIBONUCLEASE P"/>
    <property type="match status" value="1"/>
</dbReference>
<dbReference type="PANTHER" id="PTHR41173">
    <property type="entry name" value="UPF0278 PROTEIN TK1425"/>
    <property type="match status" value="1"/>
</dbReference>
<dbReference type="Pfam" id="PF08745">
    <property type="entry name" value="PIN_5"/>
    <property type="match status" value="1"/>
</dbReference>